<protein>
    <recommendedName>
        <fullName evidence="1">Small ribosomal subunit protein uS4</fullName>
    </recommendedName>
    <alternativeName>
        <fullName evidence="3">30S ribosomal protein S4</fullName>
    </alternativeName>
</protein>
<reference key="1">
    <citation type="submission" date="2007-03" db="EMBL/GenBank/DDBJ databases">
        <title>Complete sequence of chromosome of Methanococcus maripaludis C5.</title>
        <authorList>
            <consortium name="US DOE Joint Genome Institute"/>
            <person name="Copeland A."/>
            <person name="Lucas S."/>
            <person name="Lapidus A."/>
            <person name="Barry K."/>
            <person name="Glavina del Rio T."/>
            <person name="Dalin E."/>
            <person name="Tice H."/>
            <person name="Pitluck S."/>
            <person name="Chertkov O."/>
            <person name="Brettin T."/>
            <person name="Bruce D."/>
            <person name="Han C."/>
            <person name="Detter J.C."/>
            <person name="Schmutz J."/>
            <person name="Larimer F."/>
            <person name="Land M."/>
            <person name="Hauser L."/>
            <person name="Kyrpides N."/>
            <person name="Mikhailova N."/>
            <person name="Sieprawska-Lupa M."/>
            <person name="Whitman W.B."/>
            <person name="Richardson P."/>
        </authorList>
    </citation>
    <scope>NUCLEOTIDE SEQUENCE [LARGE SCALE GENOMIC DNA]</scope>
    <source>
        <strain>C5 / ATCC BAA-1333</strain>
    </source>
</reference>
<organism>
    <name type="scientific">Methanococcus maripaludis (strain C5 / ATCC BAA-1333)</name>
    <dbReference type="NCBI Taxonomy" id="402880"/>
    <lineage>
        <taxon>Archaea</taxon>
        <taxon>Methanobacteriati</taxon>
        <taxon>Methanobacteriota</taxon>
        <taxon>Methanomada group</taxon>
        <taxon>Methanococci</taxon>
        <taxon>Methanococcales</taxon>
        <taxon>Methanococcaceae</taxon>
        <taxon>Methanococcus</taxon>
    </lineage>
</organism>
<name>RS4_METM5</name>
<comment type="function">
    <text evidence="1">One of the primary rRNA binding proteins, it binds directly to 16S rRNA where it nucleates assembly of the body of the 30S subunit.</text>
</comment>
<comment type="function">
    <text evidence="1">With S5 and S12 plays an important role in translational accuracy.</text>
</comment>
<comment type="subunit">
    <text evidence="1">Part of the 30S ribosomal subunit. Contacts protein S5. The interaction surface between S4 and S5 is involved in control of translational fidelity.</text>
</comment>
<comment type="similarity">
    <text evidence="1">Belongs to the universal ribosomal protein uS4 family.</text>
</comment>
<feature type="chain" id="PRO_0000322358" description="Small ribosomal subunit protein uS4">
    <location>
        <begin position="1"/>
        <end position="178"/>
    </location>
</feature>
<feature type="domain" description="S4 RNA-binding" evidence="1">
    <location>
        <begin position="104"/>
        <end position="166"/>
    </location>
</feature>
<feature type="region of interest" description="Disordered" evidence="2">
    <location>
        <begin position="158"/>
        <end position="178"/>
    </location>
</feature>
<dbReference type="EMBL" id="CP000609">
    <property type="protein sequence ID" value="ABO34589.1"/>
    <property type="molecule type" value="Genomic_DNA"/>
</dbReference>
<dbReference type="RefSeq" id="WP_011868044.1">
    <property type="nucleotide sequence ID" value="NC_009135.1"/>
</dbReference>
<dbReference type="SMR" id="A4FWL4"/>
<dbReference type="STRING" id="402880.MmarC5_0273"/>
<dbReference type="GeneID" id="4927498"/>
<dbReference type="KEGG" id="mmq:MmarC5_0273"/>
<dbReference type="eggNOG" id="arCOG04239">
    <property type="taxonomic scope" value="Archaea"/>
</dbReference>
<dbReference type="HOGENOM" id="CLU_089738_1_1_2"/>
<dbReference type="OrthoDB" id="10429at2157"/>
<dbReference type="Proteomes" id="UP000000253">
    <property type="component" value="Chromosome"/>
</dbReference>
<dbReference type="GO" id="GO:0015935">
    <property type="term" value="C:small ribosomal subunit"/>
    <property type="evidence" value="ECO:0007669"/>
    <property type="project" value="InterPro"/>
</dbReference>
<dbReference type="GO" id="GO:0019843">
    <property type="term" value="F:rRNA binding"/>
    <property type="evidence" value="ECO:0007669"/>
    <property type="project" value="UniProtKB-UniRule"/>
</dbReference>
<dbReference type="GO" id="GO:0003735">
    <property type="term" value="F:structural constituent of ribosome"/>
    <property type="evidence" value="ECO:0007669"/>
    <property type="project" value="InterPro"/>
</dbReference>
<dbReference type="GO" id="GO:0042274">
    <property type="term" value="P:ribosomal small subunit biogenesis"/>
    <property type="evidence" value="ECO:0007669"/>
    <property type="project" value="TreeGrafter"/>
</dbReference>
<dbReference type="GO" id="GO:0006412">
    <property type="term" value="P:translation"/>
    <property type="evidence" value="ECO:0007669"/>
    <property type="project" value="UniProtKB-UniRule"/>
</dbReference>
<dbReference type="CDD" id="cd00165">
    <property type="entry name" value="S4"/>
    <property type="match status" value="1"/>
</dbReference>
<dbReference type="FunFam" id="3.10.290.10:FF:000026">
    <property type="entry name" value="30S ribosomal protein S4"/>
    <property type="match status" value="1"/>
</dbReference>
<dbReference type="Gene3D" id="3.10.290.10">
    <property type="entry name" value="RNA-binding S4 domain"/>
    <property type="match status" value="1"/>
</dbReference>
<dbReference type="HAMAP" id="MF_01306_A">
    <property type="entry name" value="Ribosomal_uS4_A"/>
    <property type="match status" value="1"/>
</dbReference>
<dbReference type="InterPro" id="IPR022801">
    <property type="entry name" value="Ribosomal_uS4"/>
</dbReference>
<dbReference type="InterPro" id="IPR022802">
    <property type="entry name" value="Ribosomal_uS4_arc"/>
</dbReference>
<dbReference type="InterPro" id="IPR018079">
    <property type="entry name" value="Ribosomal_uS4_CS"/>
</dbReference>
<dbReference type="InterPro" id="IPR005710">
    <property type="entry name" value="Ribosomal_uS4_euk/arc"/>
</dbReference>
<dbReference type="InterPro" id="IPR001912">
    <property type="entry name" value="Ribosomal_uS4_N"/>
</dbReference>
<dbReference type="InterPro" id="IPR002942">
    <property type="entry name" value="S4_RNA-bd"/>
</dbReference>
<dbReference type="InterPro" id="IPR036986">
    <property type="entry name" value="S4_RNA-bd_sf"/>
</dbReference>
<dbReference type="NCBIfam" id="NF003139">
    <property type="entry name" value="PRK04051.1"/>
    <property type="match status" value="1"/>
</dbReference>
<dbReference type="NCBIfam" id="TIGR01018">
    <property type="entry name" value="uS4_arch"/>
    <property type="match status" value="1"/>
</dbReference>
<dbReference type="PANTHER" id="PTHR11831">
    <property type="entry name" value="30S 40S RIBOSOMAL PROTEIN"/>
    <property type="match status" value="1"/>
</dbReference>
<dbReference type="PANTHER" id="PTHR11831:SF5">
    <property type="entry name" value="40S RIBOSOMAL PROTEIN S9"/>
    <property type="match status" value="1"/>
</dbReference>
<dbReference type="Pfam" id="PF01479">
    <property type="entry name" value="S4"/>
    <property type="match status" value="1"/>
</dbReference>
<dbReference type="SMART" id="SM01390">
    <property type="entry name" value="Ribosomal_S4"/>
    <property type="match status" value="1"/>
</dbReference>
<dbReference type="SMART" id="SM00363">
    <property type="entry name" value="S4"/>
    <property type="match status" value="1"/>
</dbReference>
<dbReference type="SUPFAM" id="SSF55174">
    <property type="entry name" value="Alpha-L RNA-binding motif"/>
    <property type="match status" value="1"/>
</dbReference>
<dbReference type="PROSITE" id="PS00632">
    <property type="entry name" value="RIBOSOMAL_S4"/>
    <property type="match status" value="1"/>
</dbReference>
<dbReference type="PROSITE" id="PS50889">
    <property type="entry name" value="S4"/>
    <property type="match status" value="1"/>
</dbReference>
<proteinExistence type="inferred from homology"/>
<keyword id="KW-0687">Ribonucleoprotein</keyword>
<keyword id="KW-0689">Ribosomal protein</keyword>
<keyword id="KW-0694">RNA-binding</keyword>
<keyword id="KW-0699">rRNA-binding</keyword>
<sequence length="178" mass="20349">MGDPRRLGKKYDTPNHPWIGERIQSEKEISQKYGLVNKKELWKMETQLRNYRRQARKLISDTTTQGGKEAVQLFNVLKRYAILVESEPTLDHVLSLNIESILERRLQTIVYRKGLAKTAKQARQFIVHGHIAVNGKRVTAPAYLVSVAENDAIEYVPNSPMASENHPERTAAVSEENQ</sequence>
<gene>
    <name evidence="1" type="primary">rps4</name>
    <name type="ordered locus">MmarC5_0273</name>
</gene>
<accession>A4FWL4</accession>
<evidence type="ECO:0000255" key="1">
    <source>
        <dbReference type="HAMAP-Rule" id="MF_01306"/>
    </source>
</evidence>
<evidence type="ECO:0000256" key="2">
    <source>
        <dbReference type="SAM" id="MobiDB-lite"/>
    </source>
</evidence>
<evidence type="ECO:0000305" key="3"/>